<proteinExistence type="inferred from homology"/>
<sequence>MRAVMGININATARSLLLSEFVSAFFLAMRYFFQPKPTLNYPFEKGPISPRFRGEHALRRYPNGEERCIACKLCEAVCPAQAITIEAGPRRNDGTRRTVRYDIDMVKCIYCGLCQEACPVDAIVEGPNFEFATETREELFYDKAKLLANGDRWEREIAKAIELDAPYR</sequence>
<keyword id="KW-0004">4Fe-4S</keyword>
<keyword id="KW-0997">Cell inner membrane</keyword>
<keyword id="KW-1003">Cell membrane</keyword>
<keyword id="KW-0408">Iron</keyword>
<keyword id="KW-0411">Iron-sulfur</keyword>
<keyword id="KW-0472">Membrane</keyword>
<keyword id="KW-0479">Metal-binding</keyword>
<keyword id="KW-0520">NAD</keyword>
<keyword id="KW-0874">Quinone</keyword>
<keyword id="KW-1185">Reference proteome</keyword>
<keyword id="KW-0677">Repeat</keyword>
<keyword id="KW-1278">Translocase</keyword>
<keyword id="KW-0830">Ubiquinone</keyword>
<accession>Q89KJ6</accession>
<reference key="1">
    <citation type="journal article" date="2002" name="DNA Res.">
        <title>Complete genomic sequence of nitrogen-fixing symbiotic bacterium Bradyrhizobium japonicum USDA110.</title>
        <authorList>
            <person name="Kaneko T."/>
            <person name="Nakamura Y."/>
            <person name="Sato S."/>
            <person name="Minamisawa K."/>
            <person name="Uchiumi T."/>
            <person name="Sasamoto S."/>
            <person name="Watanabe A."/>
            <person name="Idesawa K."/>
            <person name="Iriguchi M."/>
            <person name="Kawashima K."/>
            <person name="Kohara M."/>
            <person name="Matsumoto M."/>
            <person name="Shimpo S."/>
            <person name="Tsuruoka H."/>
            <person name="Wada T."/>
            <person name="Yamada M."/>
            <person name="Tabata S."/>
        </authorList>
    </citation>
    <scope>NUCLEOTIDE SEQUENCE [LARGE SCALE GENOMIC DNA]</scope>
    <source>
        <strain>JCM 10833 / BCRC 13528 / IAM 13628 / NBRC 14792 / USDA 110</strain>
    </source>
</reference>
<gene>
    <name evidence="1" type="primary">nuoI</name>
    <name type="ordered locus">bll4909</name>
</gene>
<protein>
    <recommendedName>
        <fullName evidence="1">NADH-quinone oxidoreductase subunit I</fullName>
        <ecNumber evidence="1">7.1.1.-</ecNumber>
    </recommendedName>
    <alternativeName>
        <fullName evidence="1">NADH dehydrogenase I subunit I</fullName>
    </alternativeName>
    <alternativeName>
        <fullName evidence="1">NDH-1 subunit I</fullName>
    </alternativeName>
</protein>
<organism>
    <name type="scientific">Bradyrhizobium diazoefficiens (strain JCM 10833 / BCRC 13528 / IAM 13628 / NBRC 14792 / USDA 110)</name>
    <dbReference type="NCBI Taxonomy" id="224911"/>
    <lineage>
        <taxon>Bacteria</taxon>
        <taxon>Pseudomonadati</taxon>
        <taxon>Pseudomonadota</taxon>
        <taxon>Alphaproteobacteria</taxon>
        <taxon>Hyphomicrobiales</taxon>
        <taxon>Nitrobacteraceae</taxon>
        <taxon>Bradyrhizobium</taxon>
    </lineage>
</organism>
<comment type="function">
    <text evidence="1">NDH-1 shuttles electrons from NADH, via FMN and iron-sulfur (Fe-S) centers, to quinones in the respiratory chain. The immediate electron acceptor for the enzyme in this species is believed to be ubiquinone. Couples the redox reaction to proton translocation (for every two electrons transferred, four hydrogen ions are translocated across the cytoplasmic membrane), and thus conserves the redox energy in a proton gradient.</text>
</comment>
<comment type="catalytic activity">
    <reaction evidence="1">
        <text>a quinone + NADH + 5 H(+)(in) = a quinol + NAD(+) + 4 H(+)(out)</text>
        <dbReference type="Rhea" id="RHEA:57888"/>
        <dbReference type="ChEBI" id="CHEBI:15378"/>
        <dbReference type="ChEBI" id="CHEBI:24646"/>
        <dbReference type="ChEBI" id="CHEBI:57540"/>
        <dbReference type="ChEBI" id="CHEBI:57945"/>
        <dbReference type="ChEBI" id="CHEBI:132124"/>
    </reaction>
</comment>
<comment type="cofactor">
    <cofactor evidence="1">
        <name>[4Fe-4S] cluster</name>
        <dbReference type="ChEBI" id="CHEBI:49883"/>
    </cofactor>
    <text evidence="1">Binds 2 [4Fe-4S] clusters per subunit.</text>
</comment>
<comment type="subunit">
    <text evidence="1">NDH-1 is composed of 14 different subunits. Subunits NuoA, H, J, K, L, M, N constitute the membrane sector of the complex.</text>
</comment>
<comment type="subcellular location">
    <subcellularLocation>
        <location evidence="1">Cell inner membrane</location>
        <topology evidence="1">Peripheral membrane protein</topology>
    </subcellularLocation>
</comment>
<comment type="similarity">
    <text evidence="1">Belongs to the complex I 23 kDa subunit family.</text>
</comment>
<evidence type="ECO:0000255" key="1">
    <source>
        <dbReference type="HAMAP-Rule" id="MF_01351"/>
    </source>
</evidence>
<feature type="chain" id="PRO_0000250882" description="NADH-quinone oxidoreductase subunit I">
    <location>
        <begin position="1"/>
        <end position="168"/>
    </location>
</feature>
<feature type="domain" description="4Fe-4S ferredoxin-type 1" evidence="1">
    <location>
        <begin position="58"/>
        <end position="88"/>
    </location>
</feature>
<feature type="domain" description="4Fe-4S ferredoxin-type 2" evidence="1">
    <location>
        <begin position="99"/>
        <end position="128"/>
    </location>
</feature>
<feature type="binding site" evidence="1">
    <location>
        <position position="68"/>
    </location>
    <ligand>
        <name>[4Fe-4S] cluster</name>
        <dbReference type="ChEBI" id="CHEBI:49883"/>
        <label>1</label>
    </ligand>
</feature>
<feature type="binding site" evidence="1">
    <location>
        <position position="71"/>
    </location>
    <ligand>
        <name>[4Fe-4S] cluster</name>
        <dbReference type="ChEBI" id="CHEBI:49883"/>
        <label>1</label>
    </ligand>
</feature>
<feature type="binding site" evidence="1">
    <location>
        <position position="74"/>
    </location>
    <ligand>
        <name>[4Fe-4S] cluster</name>
        <dbReference type="ChEBI" id="CHEBI:49883"/>
        <label>1</label>
    </ligand>
</feature>
<feature type="binding site" evidence="1">
    <location>
        <position position="78"/>
    </location>
    <ligand>
        <name>[4Fe-4S] cluster</name>
        <dbReference type="ChEBI" id="CHEBI:49883"/>
        <label>2</label>
    </ligand>
</feature>
<feature type="binding site" evidence="1">
    <location>
        <position position="108"/>
    </location>
    <ligand>
        <name>[4Fe-4S] cluster</name>
        <dbReference type="ChEBI" id="CHEBI:49883"/>
        <label>2</label>
    </ligand>
</feature>
<feature type="binding site" evidence="1">
    <location>
        <position position="111"/>
    </location>
    <ligand>
        <name>[4Fe-4S] cluster</name>
        <dbReference type="ChEBI" id="CHEBI:49883"/>
        <label>2</label>
    </ligand>
</feature>
<feature type="binding site" evidence="1">
    <location>
        <position position="114"/>
    </location>
    <ligand>
        <name>[4Fe-4S] cluster</name>
        <dbReference type="ChEBI" id="CHEBI:49883"/>
        <label>2</label>
    </ligand>
</feature>
<feature type="binding site" evidence="1">
    <location>
        <position position="118"/>
    </location>
    <ligand>
        <name>[4Fe-4S] cluster</name>
        <dbReference type="ChEBI" id="CHEBI:49883"/>
        <label>1</label>
    </ligand>
</feature>
<name>NUOI_BRADU</name>
<dbReference type="EC" id="7.1.1.-" evidence="1"/>
<dbReference type="EMBL" id="BA000040">
    <property type="protein sequence ID" value="BAC50174.1"/>
    <property type="molecule type" value="Genomic_DNA"/>
</dbReference>
<dbReference type="RefSeq" id="NP_771549.1">
    <property type="nucleotide sequence ID" value="NC_004463.1"/>
</dbReference>
<dbReference type="SMR" id="Q89KJ6"/>
<dbReference type="FunCoup" id="Q89KJ6">
    <property type="interactions" value="516"/>
</dbReference>
<dbReference type="STRING" id="224911.AAV28_21870"/>
<dbReference type="EnsemblBacteria" id="BAC50174">
    <property type="protein sequence ID" value="BAC50174"/>
    <property type="gene ID" value="BAC50174"/>
</dbReference>
<dbReference type="KEGG" id="bja:bll4909"/>
<dbReference type="PATRIC" id="fig|224911.5.peg.4994"/>
<dbReference type="eggNOG" id="COG1143">
    <property type="taxonomic scope" value="Bacteria"/>
</dbReference>
<dbReference type="HOGENOM" id="CLU_067218_5_1_5"/>
<dbReference type="InParanoid" id="Q89KJ6"/>
<dbReference type="OrthoDB" id="9808559at2"/>
<dbReference type="PhylomeDB" id="Q89KJ6"/>
<dbReference type="Proteomes" id="UP000002526">
    <property type="component" value="Chromosome"/>
</dbReference>
<dbReference type="GO" id="GO:0005886">
    <property type="term" value="C:plasma membrane"/>
    <property type="evidence" value="ECO:0007669"/>
    <property type="project" value="UniProtKB-SubCell"/>
</dbReference>
<dbReference type="GO" id="GO:0051539">
    <property type="term" value="F:4 iron, 4 sulfur cluster binding"/>
    <property type="evidence" value="ECO:0007669"/>
    <property type="project" value="UniProtKB-KW"/>
</dbReference>
<dbReference type="GO" id="GO:0005506">
    <property type="term" value="F:iron ion binding"/>
    <property type="evidence" value="ECO:0007669"/>
    <property type="project" value="UniProtKB-UniRule"/>
</dbReference>
<dbReference type="GO" id="GO:0050136">
    <property type="term" value="F:NADH:ubiquinone reductase (non-electrogenic) activity"/>
    <property type="evidence" value="ECO:0007669"/>
    <property type="project" value="UniProtKB-UniRule"/>
</dbReference>
<dbReference type="GO" id="GO:0048038">
    <property type="term" value="F:quinone binding"/>
    <property type="evidence" value="ECO:0007669"/>
    <property type="project" value="UniProtKB-KW"/>
</dbReference>
<dbReference type="GO" id="GO:0009060">
    <property type="term" value="P:aerobic respiration"/>
    <property type="evidence" value="ECO:0000318"/>
    <property type="project" value="GO_Central"/>
</dbReference>
<dbReference type="FunFam" id="3.30.70.3270:FF:000001">
    <property type="entry name" value="NADH-quinone oxidoreductase subunit I 1"/>
    <property type="match status" value="1"/>
</dbReference>
<dbReference type="Gene3D" id="3.30.70.3270">
    <property type="match status" value="1"/>
</dbReference>
<dbReference type="HAMAP" id="MF_01351">
    <property type="entry name" value="NDH1_NuoI"/>
    <property type="match status" value="1"/>
</dbReference>
<dbReference type="InterPro" id="IPR017896">
    <property type="entry name" value="4Fe4S_Fe-S-bd"/>
</dbReference>
<dbReference type="InterPro" id="IPR017900">
    <property type="entry name" value="4Fe4S_Fe_S_CS"/>
</dbReference>
<dbReference type="InterPro" id="IPR010226">
    <property type="entry name" value="NADH_quinone_OxRdtase_chainI"/>
</dbReference>
<dbReference type="NCBIfam" id="TIGR01971">
    <property type="entry name" value="NuoI"/>
    <property type="match status" value="1"/>
</dbReference>
<dbReference type="NCBIfam" id="NF004538">
    <property type="entry name" value="PRK05888.1-4"/>
    <property type="match status" value="1"/>
</dbReference>
<dbReference type="NCBIfam" id="NF004539">
    <property type="entry name" value="PRK05888.1-5"/>
    <property type="match status" value="1"/>
</dbReference>
<dbReference type="PANTHER" id="PTHR10849:SF20">
    <property type="entry name" value="NADH DEHYDROGENASE [UBIQUINONE] IRON-SULFUR PROTEIN 8, MITOCHONDRIAL"/>
    <property type="match status" value="1"/>
</dbReference>
<dbReference type="PANTHER" id="PTHR10849">
    <property type="entry name" value="NADH DEHYDROGENASE UBIQUINONE IRON-SULFUR PROTEIN 8, MITOCHONDRIAL"/>
    <property type="match status" value="1"/>
</dbReference>
<dbReference type="Pfam" id="PF12838">
    <property type="entry name" value="Fer4_7"/>
    <property type="match status" value="1"/>
</dbReference>
<dbReference type="SUPFAM" id="SSF54862">
    <property type="entry name" value="4Fe-4S ferredoxins"/>
    <property type="match status" value="1"/>
</dbReference>
<dbReference type="PROSITE" id="PS00198">
    <property type="entry name" value="4FE4S_FER_1"/>
    <property type="match status" value="2"/>
</dbReference>
<dbReference type="PROSITE" id="PS51379">
    <property type="entry name" value="4FE4S_FER_2"/>
    <property type="match status" value="2"/>
</dbReference>